<proteinExistence type="inferred from homology"/>
<dbReference type="EMBL" id="CM001235">
    <property type="protein sequence ID" value="EHA48121.1"/>
    <property type="molecule type" value="Genomic_DNA"/>
</dbReference>
<dbReference type="RefSeq" id="XP_003717705.1">
    <property type="nucleotide sequence ID" value="XM_003717657.1"/>
</dbReference>
<dbReference type="EnsemblFungi" id="MGG_17301T0">
    <property type="protein sequence ID" value="MGG_17301T0"/>
    <property type="gene ID" value="MGG_17301"/>
</dbReference>
<dbReference type="GeneID" id="12986607"/>
<dbReference type="KEGG" id="mgr:MGG_17301"/>
<dbReference type="VEuPathDB" id="FungiDB:MGG_17301"/>
<dbReference type="HOGENOM" id="CLU_2558726_0_0_1"/>
<dbReference type="InParanoid" id="G4NBL6"/>
<dbReference type="OrthoDB" id="9368434at2759"/>
<dbReference type="Proteomes" id="UP000009058">
    <property type="component" value="Chromosome 5"/>
</dbReference>
<dbReference type="GO" id="GO:0005576">
    <property type="term" value="C:extracellular region"/>
    <property type="evidence" value="ECO:0007669"/>
    <property type="project" value="UniProtKB-SubCell"/>
</dbReference>
<dbReference type="GO" id="GO:0042025">
    <property type="term" value="C:host cell nucleus"/>
    <property type="evidence" value="ECO:0007669"/>
    <property type="project" value="UniProtKB-SubCell"/>
</dbReference>
<dbReference type="GO" id="GO:0008270">
    <property type="term" value="F:zinc ion binding"/>
    <property type="evidence" value="ECO:0007669"/>
    <property type="project" value="UniProtKB-KW"/>
</dbReference>
<dbReference type="InterPro" id="IPR022755">
    <property type="entry name" value="Znf_C2H2_jaz"/>
</dbReference>
<dbReference type="InterPro" id="IPR036236">
    <property type="entry name" value="Znf_C2H2_sf"/>
</dbReference>
<dbReference type="InterPro" id="IPR013087">
    <property type="entry name" value="Znf_C2H2_type"/>
</dbReference>
<dbReference type="Pfam" id="PF12171">
    <property type="entry name" value="zf-C2H2_jaz"/>
    <property type="match status" value="1"/>
</dbReference>
<dbReference type="SUPFAM" id="SSF57667">
    <property type="entry name" value="beta-beta-alpha zinc fingers"/>
    <property type="match status" value="1"/>
</dbReference>
<dbReference type="PROSITE" id="PS00028">
    <property type="entry name" value="ZINC_FINGER_C2H2_1"/>
    <property type="match status" value="1"/>
</dbReference>
<dbReference type="PROSITE" id="PS50157">
    <property type="entry name" value="ZINC_FINGER_C2H2_2"/>
    <property type="match status" value="1"/>
</dbReference>
<feature type="signal peptide" evidence="1">
    <location>
        <begin position="1"/>
        <end position="19"/>
    </location>
</feature>
<feature type="chain" id="PRO_5003466027" description="Host transcription reprogramming factor 10">
    <location>
        <begin position="20"/>
        <end position="82"/>
    </location>
</feature>
<feature type="zinc finger region" description="C2H2-type" evidence="2">
    <location>
        <begin position="57"/>
        <end position="81"/>
    </location>
</feature>
<comment type="function">
    <text evidence="4">Probable secreted effector that translocates into the nuclei of host cells to reprogram the expression of targeted genes by binding on effector binding elements in rice.</text>
</comment>
<comment type="subcellular location">
    <subcellularLocation>
        <location evidence="1">Secreted</location>
    </subcellularLocation>
    <subcellularLocation>
        <location evidence="4">Host nucleus</location>
    </subcellularLocation>
</comment>
<accession>G4NBL6</accession>
<organism>
    <name type="scientific">Pyricularia oryzae (strain 70-15 / ATCC MYA-4617 / FGSC 8958)</name>
    <name type="common">Rice blast fungus</name>
    <name type="synonym">Magnaporthe oryzae</name>
    <dbReference type="NCBI Taxonomy" id="242507"/>
    <lineage>
        <taxon>Eukaryota</taxon>
        <taxon>Fungi</taxon>
        <taxon>Dikarya</taxon>
        <taxon>Ascomycota</taxon>
        <taxon>Pezizomycotina</taxon>
        <taxon>Sordariomycetes</taxon>
        <taxon>Sordariomycetidae</taxon>
        <taxon>Magnaporthales</taxon>
        <taxon>Pyriculariaceae</taxon>
        <taxon>Pyricularia</taxon>
    </lineage>
</organism>
<gene>
    <name evidence="3" type="primary">HTR10</name>
    <name type="ORF">MGG_17301</name>
</gene>
<reference key="1">
    <citation type="journal article" date="2005" name="Nature">
        <title>The genome sequence of the rice blast fungus Magnaporthe grisea.</title>
        <authorList>
            <person name="Dean R.A."/>
            <person name="Talbot N.J."/>
            <person name="Ebbole D.J."/>
            <person name="Farman M.L."/>
            <person name="Mitchell T.K."/>
            <person name="Orbach M.J."/>
            <person name="Thon M.R."/>
            <person name="Kulkarni R."/>
            <person name="Xu J.-R."/>
            <person name="Pan H."/>
            <person name="Read N.D."/>
            <person name="Lee Y.-H."/>
            <person name="Carbone I."/>
            <person name="Brown D."/>
            <person name="Oh Y.Y."/>
            <person name="Donofrio N."/>
            <person name="Jeong J.S."/>
            <person name="Soanes D.M."/>
            <person name="Djonovic S."/>
            <person name="Kolomiets E."/>
            <person name="Rehmeyer C."/>
            <person name="Li W."/>
            <person name="Harding M."/>
            <person name="Kim S."/>
            <person name="Lebrun M.-H."/>
            <person name="Bohnert H."/>
            <person name="Coughlan S."/>
            <person name="Butler J."/>
            <person name="Calvo S.E."/>
            <person name="Ma L.-J."/>
            <person name="Nicol R."/>
            <person name="Purcell S."/>
            <person name="Nusbaum C."/>
            <person name="Galagan J.E."/>
            <person name="Birren B.W."/>
        </authorList>
    </citation>
    <scope>NUCLEOTIDE SEQUENCE [LARGE SCALE GENOMIC DNA]</scope>
    <source>
        <strain>70-15 / ATCC MYA-4617 / FGSC 8958</strain>
    </source>
</reference>
<reference key="2">
    <citation type="journal article" date="2020" name="Nat. Commun.">
        <title>Two nuclear effectors of the rice blast fungus modulate host immunity via transcriptional reprogramming.</title>
        <authorList>
            <person name="Kim S."/>
            <person name="Kim C.Y."/>
            <person name="Park S.Y."/>
            <person name="Kim K.T."/>
            <person name="Jeon J."/>
            <person name="Chung H."/>
            <person name="Choi G."/>
            <person name="Kwon S."/>
            <person name="Choi J."/>
            <person name="Jeon J."/>
            <person name="Jeon J.S."/>
            <person name="Khang C.H."/>
            <person name="Kang S."/>
            <person name="Lee Y.H."/>
        </authorList>
    </citation>
    <scope>FUNCTION</scope>
</reference>
<protein>
    <recommendedName>
        <fullName evidence="3">Host transcription reprogramming factor 10</fullName>
    </recommendedName>
    <alternativeName>
        <fullName evidence="3">Secreted nuclear effector HTR10</fullName>
    </alternativeName>
</protein>
<name>HTR10_PYRO7</name>
<keyword id="KW-1048">Host nucleus</keyword>
<keyword id="KW-0479">Metal-binding</keyword>
<keyword id="KW-1185">Reference proteome</keyword>
<keyword id="KW-0964">Secreted</keyword>
<keyword id="KW-0732">Signal</keyword>
<keyword id="KW-0804">Transcription</keyword>
<keyword id="KW-0805">Transcription regulation</keyword>
<keyword id="KW-0843">Virulence</keyword>
<keyword id="KW-0862">Zinc</keyword>
<keyword id="KW-0863">Zinc-finger</keyword>
<sequence length="82" mass="8995">MQIFNMVSLVALFALGATAVPVSSITGVQCCQANHGDLTTPQAQSLFKSHQKRQDYWVCHACNKQFTTPAALQKHKDTVVHP</sequence>
<evidence type="ECO:0000255" key="1"/>
<evidence type="ECO:0000255" key="2">
    <source>
        <dbReference type="PROSITE-ProRule" id="PRU00042"/>
    </source>
</evidence>
<evidence type="ECO:0000303" key="3">
    <source>
    </source>
</evidence>
<evidence type="ECO:0000305" key="4">
    <source>
    </source>
</evidence>